<sequence length="452" mass="50936">MNKVKIGEKYEVDITSMGHEGEGVGRIDGIAVFVKGALKGERVIVEIEEVHKNYLKGYTVKILEKSQHRVNPLCQYADRCGGCSLQHLSYKGQLEYKTQKVKDNLERIGKIYTKVHYAIGMENPLNYRNKGQFVVGEIGREKITGFYSFHSHEIVPVDNCLIQHPLSNKVVSVVKEWLNECDISVYDRKKGKGLIRHVVAKVAFKTGEVMAIIVINGEDIPCKEELIEALKEKVPGLKSVILNINTRRTKMILGNKNIVIYGKNTIEDFIKDLRFEISPLSFFQVNPIQTEILYDKAIEYAGLTGKEVVIDVYSGIGTISLFAAKKASFVYGIESVKEAVEDAEKNAQVNGVKNVKFIWGKAEREIAKLYKEGVKAEVVIVDPPRDGCDKEVIRAIVGINPKRIVYVSCNPSTLARDLRYLEDAGYRTVEVQPVDMFPYTYHVESVALVERM</sequence>
<protein>
    <recommendedName>
        <fullName>Uncharacterized RNA methyltransferase TTE1812</fullName>
        <ecNumber>2.1.1.-</ecNumber>
    </recommendedName>
</protein>
<organism>
    <name type="scientific">Caldanaerobacter subterraneus subsp. tengcongensis (strain DSM 15242 / JCM 11007 / NBRC 100824 / MB4)</name>
    <name type="common">Thermoanaerobacter tengcongensis</name>
    <dbReference type="NCBI Taxonomy" id="273068"/>
    <lineage>
        <taxon>Bacteria</taxon>
        <taxon>Bacillati</taxon>
        <taxon>Bacillota</taxon>
        <taxon>Clostridia</taxon>
        <taxon>Thermoanaerobacterales</taxon>
        <taxon>Thermoanaerobacteraceae</taxon>
        <taxon>Caldanaerobacter</taxon>
    </lineage>
</organism>
<feature type="chain" id="PRO_0000162049" description="Uncharacterized RNA methyltransferase TTE1812">
    <location>
        <begin position="1"/>
        <end position="452"/>
    </location>
</feature>
<feature type="domain" description="TRAM" evidence="2">
    <location>
        <begin position="3"/>
        <end position="61"/>
    </location>
</feature>
<feature type="active site" description="Nucleophile" evidence="3">
    <location>
        <position position="409"/>
    </location>
</feature>
<feature type="binding site" evidence="1">
    <location>
        <position position="74"/>
    </location>
    <ligand>
        <name>[4Fe-4S] cluster</name>
        <dbReference type="ChEBI" id="CHEBI:49883"/>
    </ligand>
</feature>
<feature type="binding site" evidence="1">
    <location>
        <position position="80"/>
    </location>
    <ligand>
        <name>[4Fe-4S] cluster</name>
        <dbReference type="ChEBI" id="CHEBI:49883"/>
    </ligand>
</feature>
<feature type="binding site" evidence="1">
    <location>
        <position position="83"/>
    </location>
    <ligand>
        <name>[4Fe-4S] cluster</name>
        <dbReference type="ChEBI" id="CHEBI:49883"/>
    </ligand>
</feature>
<feature type="binding site" evidence="1">
    <location>
        <position position="160"/>
    </location>
    <ligand>
        <name>[4Fe-4S] cluster</name>
        <dbReference type="ChEBI" id="CHEBI:49883"/>
    </ligand>
</feature>
<feature type="binding site" evidence="3">
    <location>
        <position position="284"/>
    </location>
    <ligand>
        <name>S-adenosyl-L-methionine</name>
        <dbReference type="ChEBI" id="CHEBI:59789"/>
    </ligand>
</feature>
<feature type="binding site" evidence="3">
    <location>
        <position position="313"/>
    </location>
    <ligand>
        <name>S-adenosyl-L-methionine</name>
        <dbReference type="ChEBI" id="CHEBI:59789"/>
    </ligand>
</feature>
<feature type="binding site" evidence="3">
    <location>
        <position position="334"/>
    </location>
    <ligand>
        <name>S-adenosyl-L-methionine</name>
        <dbReference type="ChEBI" id="CHEBI:59789"/>
    </ligand>
</feature>
<feature type="binding site" evidence="3">
    <location>
        <position position="382"/>
    </location>
    <ligand>
        <name>S-adenosyl-L-methionine</name>
        <dbReference type="ChEBI" id="CHEBI:59789"/>
    </ligand>
</feature>
<comment type="similarity">
    <text evidence="3">Belongs to the class I-like SAM-binding methyltransferase superfamily. RNA M5U methyltransferase family.</text>
</comment>
<gene>
    <name type="ordered locus">TTE1812</name>
</gene>
<name>Y1812_CALS4</name>
<accession>Q8R918</accession>
<proteinExistence type="inferred from homology"/>
<keyword id="KW-0004">4Fe-4S</keyword>
<keyword id="KW-0408">Iron</keyword>
<keyword id="KW-0411">Iron-sulfur</keyword>
<keyword id="KW-0479">Metal-binding</keyword>
<keyword id="KW-0489">Methyltransferase</keyword>
<keyword id="KW-1185">Reference proteome</keyword>
<keyword id="KW-0949">S-adenosyl-L-methionine</keyword>
<keyword id="KW-0808">Transferase</keyword>
<dbReference type="EC" id="2.1.1.-"/>
<dbReference type="EMBL" id="AE008691">
    <property type="protein sequence ID" value="AAM25004.1"/>
    <property type="molecule type" value="Genomic_DNA"/>
</dbReference>
<dbReference type="SMR" id="Q8R918"/>
<dbReference type="STRING" id="273068.TTE1812"/>
<dbReference type="KEGG" id="tte:TTE1812"/>
<dbReference type="eggNOG" id="COG2265">
    <property type="taxonomic scope" value="Bacteria"/>
</dbReference>
<dbReference type="HOGENOM" id="CLU_014689_7_0_9"/>
<dbReference type="OrthoDB" id="9804590at2"/>
<dbReference type="Proteomes" id="UP000000555">
    <property type="component" value="Chromosome"/>
</dbReference>
<dbReference type="GO" id="GO:0051539">
    <property type="term" value="F:4 iron, 4 sulfur cluster binding"/>
    <property type="evidence" value="ECO:0007669"/>
    <property type="project" value="UniProtKB-KW"/>
</dbReference>
<dbReference type="GO" id="GO:0046872">
    <property type="term" value="F:metal ion binding"/>
    <property type="evidence" value="ECO:0007669"/>
    <property type="project" value="UniProtKB-KW"/>
</dbReference>
<dbReference type="GO" id="GO:0070041">
    <property type="term" value="F:rRNA (uridine-C5-)-methyltransferase activity"/>
    <property type="evidence" value="ECO:0007669"/>
    <property type="project" value="TreeGrafter"/>
</dbReference>
<dbReference type="GO" id="GO:0070475">
    <property type="term" value="P:rRNA base methylation"/>
    <property type="evidence" value="ECO:0007669"/>
    <property type="project" value="TreeGrafter"/>
</dbReference>
<dbReference type="CDD" id="cd02440">
    <property type="entry name" value="AdoMet_MTases"/>
    <property type="match status" value="1"/>
</dbReference>
<dbReference type="FunFam" id="3.40.50.150:FF:000009">
    <property type="entry name" value="23S rRNA (Uracil(1939)-C(5))-methyltransferase RlmD"/>
    <property type="match status" value="1"/>
</dbReference>
<dbReference type="FunFam" id="2.40.50.140:FF:000097">
    <property type="entry name" value="23S rRNA (uracil(1939)-C(5))-methyltransferase RlmD"/>
    <property type="match status" value="1"/>
</dbReference>
<dbReference type="FunFam" id="2.40.50.1070:FF:000003">
    <property type="entry name" value="23S rRNA (Uracil-5-)-methyltransferase RumA"/>
    <property type="match status" value="1"/>
</dbReference>
<dbReference type="Gene3D" id="2.40.50.1070">
    <property type="match status" value="1"/>
</dbReference>
<dbReference type="Gene3D" id="2.40.50.140">
    <property type="entry name" value="Nucleic acid-binding proteins"/>
    <property type="match status" value="1"/>
</dbReference>
<dbReference type="Gene3D" id="3.40.50.150">
    <property type="entry name" value="Vaccinia Virus protein VP39"/>
    <property type="match status" value="1"/>
</dbReference>
<dbReference type="InterPro" id="IPR030390">
    <property type="entry name" value="MeTrfase_TrmA_AS"/>
</dbReference>
<dbReference type="InterPro" id="IPR030391">
    <property type="entry name" value="MeTrfase_TrmA_CS"/>
</dbReference>
<dbReference type="InterPro" id="IPR012340">
    <property type="entry name" value="NA-bd_OB-fold"/>
</dbReference>
<dbReference type="InterPro" id="IPR029063">
    <property type="entry name" value="SAM-dependent_MTases_sf"/>
</dbReference>
<dbReference type="InterPro" id="IPR002792">
    <property type="entry name" value="TRAM_dom"/>
</dbReference>
<dbReference type="InterPro" id="IPR010280">
    <property type="entry name" value="U5_MeTrfase_fam"/>
</dbReference>
<dbReference type="NCBIfam" id="TIGR00479">
    <property type="entry name" value="rumA"/>
    <property type="match status" value="1"/>
</dbReference>
<dbReference type="PANTHER" id="PTHR11061">
    <property type="entry name" value="RNA M5U METHYLTRANSFERASE"/>
    <property type="match status" value="1"/>
</dbReference>
<dbReference type="PANTHER" id="PTHR11061:SF30">
    <property type="entry name" value="TRNA (URACIL(54)-C(5))-METHYLTRANSFERASE"/>
    <property type="match status" value="1"/>
</dbReference>
<dbReference type="Pfam" id="PF01938">
    <property type="entry name" value="TRAM"/>
    <property type="match status" value="1"/>
</dbReference>
<dbReference type="Pfam" id="PF05958">
    <property type="entry name" value="tRNA_U5-meth_tr"/>
    <property type="match status" value="1"/>
</dbReference>
<dbReference type="SUPFAM" id="SSF50249">
    <property type="entry name" value="Nucleic acid-binding proteins"/>
    <property type="match status" value="1"/>
</dbReference>
<dbReference type="SUPFAM" id="SSF53335">
    <property type="entry name" value="S-adenosyl-L-methionine-dependent methyltransferases"/>
    <property type="match status" value="1"/>
</dbReference>
<dbReference type="PROSITE" id="PS51687">
    <property type="entry name" value="SAM_MT_RNA_M5U"/>
    <property type="match status" value="1"/>
</dbReference>
<dbReference type="PROSITE" id="PS50926">
    <property type="entry name" value="TRAM"/>
    <property type="match status" value="1"/>
</dbReference>
<dbReference type="PROSITE" id="PS01230">
    <property type="entry name" value="TRMA_1"/>
    <property type="match status" value="1"/>
</dbReference>
<dbReference type="PROSITE" id="PS01231">
    <property type="entry name" value="TRMA_2"/>
    <property type="match status" value="1"/>
</dbReference>
<evidence type="ECO:0000250" key="1"/>
<evidence type="ECO:0000255" key="2">
    <source>
        <dbReference type="PROSITE-ProRule" id="PRU00208"/>
    </source>
</evidence>
<evidence type="ECO:0000255" key="3">
    <source>
        <dbReference type="PROSITE-ProRule" id="PRU01024"/>
    </source>
</evidence>
<reference key="1">
    <citation type="journal article" date="2002" name="Genome Res.">
        <title>A complete sequence of the T. tengcongensis genome.</title>
        <authorList>
            <person name="Bao Q."/>
            <person name="Tian Y."/>
            <person name="Li W."/>
            <person name="Xu Z."/>
            <person name="Xuan Z."/>
            <person name="Hu S."/>
            <person name="Dong W."/>
            <person name="Yang J."/>
            <person name="Chen Y."/>
            <person name="Xue Y."/>
            <person name="Xu Y."/>
            <person name="Lai X."/>
            <person name="Huang L."/>
            <person name="Dong X."/>
            <person name="Ma Y."/>
            <person name="Ling L."/>
            <person name="Tan H."/>
            <person name="Chen R."/>
            <person name="Wang J."/>
            <person name="Yu J."/>
            <person name="Yang H."/>
        </authorList>
    </citation>
    <scope>NUCLEOTIDE SEQUENCE [LARGE SCALE GENOMIC DNA]</scope>
    <source>
        <strain>DSM 15242 / JCM 11007 / NBRC 100824 / MB4</strain>
    </source>
</reference>